<name>SLA_DABPA</name>
<sequence>DQDCLPGWSFYEGNCYKAFDEPKSWVDAEKFCQKQSNGKHLASIEGLGKANFVAKLVSEDQSETLREPQIHVWIGLRDQSERQQCSSHWTDGSAVSYECGLAYPFIC</sequence>
<protein>
    <recommendedName>
        <fullName>Snaclec VP12 subunit A</fullName>
    </recommendedName>
</protein>
<evidence type="ECO:0000255" key="1">
    <source>
        <dbReference type="PROSITE-ProRule" id="PRU00040"/>
    </source>
</evidence>
<evidence type="ECO:0000269" key="2">
    <source>
    </source>
</evidence>
<evidence type="ECO:0000305" key="3"/>
<comment type="function">
    <text evidence="2">Inhibits integrin alpha-2/beta-1- (ITGA2/ITGB1) dependent melanoma metastasis.</text>
</comment>
<comment type="subunit">
    <text evidence="2">Heterodimer of subunits alpha and beta; disulfide-linked.</text>
</comment>
<comment type="subcellular location">
    <subcellularLocation>
        <location>Secreted</location>
    </subcellularLocation>
</comment>
<comment type="tissue specificity">
    <text>Expressed by the venom gland.</text>
</comment>
<comment type="similarity">
    <text evidence="3">Belongs to the snaclec family.</text>
</comment>
<organism>
    <name type="scientific">Daboia palaestinae</name>
    <name type="common">Palestine viper</name>
    <name type="synonym">Vipera palaestinae</name>
    <dbReference type="NCBI Taxonomy" id="1170828"/>
    <lineage>
        <taxon>Eukaryota</taxon>
        <taxon>Metazoa</taxon>
        <taxon>Chordata</taxon>
        <taxon>Craniata</taxon>
        <taxon>Vertebrata</taxon>
        <taxon>Euteleostomi</taxon>
        <taxon>Lepidosauria</taxon>
        <taxon>Squamata</taxon>
        <taxon>Bifurcata</taxon>
        <taxon>Unidentata</taxon>
        <taxon>Episquamata</taxon>
        <taxon>Toxicofera</taxon>
        <taxon>Serpentes</taxon>
        <taxon>Colubroidea</taxon>
        <taxon>Viperidae</taxon>
        <taxon>Viperinae</taxon>
        <taxon>Daboia</taxon>
    </lineage>
</organism>
<reference key="1">
    <citation type="journal article" date="2009" name="Cancer Biol. Ther.">
        <title>Effect of VP12 and viperistatin on inhibition of collagen-receptor-dependent melanoma metastasis.</title>
        <authorList>
            <person name="Staniszewska I."/>
            <person name="Walsh E.M."/>
            <person name="Rothman V.L."/>
            <person name="Gaathon A."/>
            <person name="Tuszynski G.P."/>
            <person name="Calvete J.J."/>
            <person name="Lazarovici P."/>
            <person name="Marcinkiewicz C."/>
        </authorList>
    </citation>
    <scope>PROTEIN SEQUENCE</scope>
    <scope>FUNCTION</scope>
    <scope>SUBUNIT</scope>
    <scope>IDENTIFICATION BY MASS SPECTROMETRY</scope>
    <source>
        <tissue>Venom</tissue>
    </source>
</reference>
<proteinExistence type="evidence at protein level"/>
<keyword id="KW-0903">Direct protein sequencing</keyword>
<keyword id="KW-1015">Disulfide bond</keyword>
<keyword id="KW-0964">Secreted</keyword>
<keyword id="KW-0800">Toxin</keyword>
<feature type="chain" id="PRO_0000422553" description="Snaclec VP12 subunit A">
    <location>
        <begin position="1"/>
        <end position="107" status="greater than"/>
    </location>
</feature>
<feature type="domain" description="C-type lectin" evidence="1">
    <location>
        <begin position="11"/>
        <end position="107" status="greater than"/>
    </location>
</feature>
<feature type="disulfide bond" evidence="1">
    <location>
        <begin position="4"/>
        <end position="15"/>
    </location>
</feature>
<feature type="disulfide bond" evidence="1">
    <location>
        <begin position="32"/>
        <end position="107"/>
    </location>
</feature>
<feature type="disulfide bond" description="Interchain (with C-77 in subunit beta)" evidence="1">
    <location>
        <position position="85"/>
    </location>
</feature>
<feature type="non-consecutive residues" evidence="3">
    <location>
        <begin position="98"/>
        <end position="99"/>
    </location>
</feature>
<feature type="non-terminal residue">
    <location>
        <position position="107"/>
    </location>
</feature>
<accession>P0DJL4</accession>
<dbReference type="SMR" id="P0DJL4"/>
<dbReference type="GO" id="GO:0005576">
    <property type="term" value="C:extracellular region"/>
    <property type="evidence" value="ECO:0007669"/>
    <property type="project" value="UniProtKB-SubCell"/>
</dbReference>
<dbReference type="GO" id="GO:0090729">
    <property type="term" value="F:toxin activity"/>
    <property type="evidence" value="ECO:0007669"/>
    <property type="project" value="UniProtKB-KW"/>
</dbReference>
<dbReference type="Gene3D" id="3.10.100.10">
    <property type="entry name" value="Mannose-Binding Protein A, subunit A"/>
    <property type="match status" value="1"/>
</dbReference>
<dbReference type="InterPro" id="IPR001304">
    <property type="entry name" value="C-type_lectin-like"/>
</dbReference>
<dbReference type="InterPro" id="IPR016186">
    <property type="entry name" value="C-type_lectin-like/link_sf"/>
</dbReference>
<dbReference type="InterPro" id="IPR050111">
    <property type="entry name" value="C-type_lectin/snaclec_domain"/>
</dbReference>
<dbReference type="InterPro" id="IPR016187">
    <property type="entry name" value="CTDL_fold"/>
</dbReference>
<dbReference type="PANTHER" id="PTHR22803">
    <property type="entry name" value="MANNOSE, PHOSPHOLIPASE, LECTIN RECEPTOR RELATED"/>
    <property type="match status" value="1"/>
</dbReference>
<dbReference type="Pfam" id="PF00059">
    <property type="entry name" value="Lectin_C"/>
    <property type="match status" value="1"/>
</dbReference>
<dbReference type="SMART" id="SM00034">
    <property type="entry name" value="CLECT"/>
    <property type="match status" value="1"/>
</dbReference>
<dbReference type="SUPFAM" id="SSF56436">
    <property type="entry name" value="C-type lectin-like"/>
    <property type="match status" value="1"/>
</dbReference>
<dbReference type="PROSITE" id="PS50041">
    <property type="entry name" value="C_TYPE_LECTIN_2"/>
    <property type="match status" value="1"/>
</dbReference>